<accession>Q4ZZX7</accession>
<dbReference type="EMBL" id="CP000075">
    <property type="protein sequence ID" value="AAY35295.1"/>
    <property type="molecule type" value="Genomic_DNA"/>
</dbReference>
<dbReference type="RefSeq" id="YP_233333.1">
    <property type="nucleotide sequence ID" value="NC_007005.1"/>
</dbReference>
<dbReference type="SMR" id="Q4ZZX7"/>
<dbReference type="STRING" id="205918.Psyr_0222"/>
<dbReference type="KEGG" id="psb:Psyr_0222"/>
<dbReference type="PATRIC" id="fig|205918.7.peg.220"/>
<dbReference type="eggNOG" id="COG2003">
    <property type="taxonomic scope" value="Bacteria"/>
</dbReference>
<dbReference type="HOGENOM" id="CLU_073529_0_1_6"/>
<dbReference type="OrthoDB" id="9804482at2"/>
<dbReference type="Proteomes" id="UP000000426">
    <property type="component" value="Chromosome"/>
</dbReference>
<dbReference type="GO" id="GO:0046872">
    <property type="term" value="F:metal ion binding"/>
    <property type="evidence" value="ECO:0007669"/>
    <property type="project" value="UniProtKB-KW"/>
</dbReference>
<dbReference type="GO" id="GO:0008237">
    <property type="term" value="F:metallopeptidase activity"/>
    <property type="evidence" value="ECO:0007669"/>
    <property type="project" value="UniProtKB-KW"/>
</dbReference>
<dbReference type="GO" id="GO:0006508">
    <property type="term" value="P:proteolysis"/>
    <property type="evidence" value="ECO:0007669"/>
    <property type="project" value="UniProtKB-KW"/>
</dbReference>
<dbReference type="CDD" id="cd08071">
    <property type="entry name" value="MPN_DUF2466"/>
    <property type="match status" value="1"/>
</dbReference>
<dbReference type="FunFam" id="3.40.140.10:FF:000032">
    <property type="entry name" value="DNA repair protein RadC"/>
    <property type="match status" value="1"/>
</dbReference>
<dbReference type="Gene3D" id="3.40.140.10">
    <property type="entry name" value="Cytidine Deaminase, domain 2"/>
    <property type="match status" value="1"/>
</dbReference>
<dbReference type="InterPro" id="IPR037518">
    <property type="entry name" value="MPN"/>
</dbReference>
<dbReference type="InterPro" id="IPR025657">
    <property type="entry name" value="RadC_JAB"/>
</dbReference>
<dbReference type="InterPro" id="IPR010994">
    <property type="entry name" value="RuvA_2-like"/>
</dbReference>
<dbReference type="InterPro" id="IPR001405">
    <property type="entry name" value="UPF0758"/>
</dbReference>
<dbReference type="InterPro" id="IPR020891">
    <property type="entry name" value="UPF0758_CS"/>
</dbReference>
<dbReference type="InterPro" id="IPR046778">
    <property type="entry name" value="UPF0758_N"/>
</dbReference>
<dbReference type="NCBIfam" id="NF000642">
    <property type="entry name" value="PRK00024.1"/>
    <property type="match status" value="1"/>
</dbReference>
<dbReference type="NCBIfam" id="TIGR00608">
    <property type="entry name" value="radc"/>
    <property type="match status" value="1"/>
</dbReference>
<dbReference type="PANTHER" id="PTHR30471">
    <property type="entry name" value="DNA REPAIR PROTEIN RADC"/>
    <property type="match status" value="1"/>
</dbReference>
<dbReference type="PANTHER" id="PTHR30471:SF3">
    <property type="entry name" value="UPF0758 PROTEIN YEES-RELATED"/>
    <property type="match status" value="1"/>
</dbReference>
<dbReference type="Pfam" id="PF04002">
    <property type="entry name" value="RadC"/>
    <property type="match status" value="1"/>
</dbReference>
<dbReference type="Pfam" id="PF20582">
    <property type="entry name" value="UPF0758_N"/>
    <property type="match status" value="1"/>
</dbReference>
<dbReference type="SUPFAM" id="SSF102712">
    <property type="entry name" value="JAB1/MPN domain"/>
    <property type="match status" value="1"/>
</dbReference>
<dbReference type="SUPFAM" id="SSF47781">
    <property type="entry name" value="RuvA domain 2-like"/>
    <property type="match status" value="1"/>
</dbReference>
<dbReference type="PROSITE" id="PS50249">
    <property type="entry name" value="MPN"/>
    <property type="match status" value="1"/>
</dbReference>
<dbReference type="PROSITE" id="PS01302">
    <property type="entry name" value="UPF0758"/>
    <property type="match status" value="1"/>
</dbReference>
<proteinExistence type="inferred from homology"/>
<gene>
    <name type="ordered locus">Psyr_0222</name>
</gene>
<name>Y222_PSEU2</name>
<sequence>MSIRSWPAAERPRERLLELGAASLSDAELLAIFLRTGVAGKSAVDLARHLLNQFDGLRPLLDADLSAFTSQLGLGPAKFAQLQAVMEMARRHMAESLRRESALENPTQVRSYLKALLRHEPHEVFGCLFLDNKHRVMTFEILFRGTINASYVHPRQVVKRAMAHNAASLILCHNHPSGITTPSRSDIDLTKRLKEALLLVDVHVLDHVIVGDGEPLSMVERGLM</sequence>
<keyword id="KW-0378">Hydrolase</keyword>
<keyword id="KW-0479">Metal-binding</keyword>
<keyword id="KW-0482">Metalloprotease</keyword>
<keyword id="KW-0645">Protease</keyword>
<keyword id="KW-0862">Zinc</keyword>
<reference key="1">
    <citation type="journal article" date="2005" name="Proc. Natl. Acad. Sci. U.S.A.">
        <title>Comparison of the complete genome sequences of Pseudomonas syringae pv. syringae B728a and pv. tomato DC3000.</title>
        <authorList>
            <person name="Feil H."/>
            <person name="Feil W.S."/>
            <person name="Chain P."/>
            <person name="Larimer F."/>
            <person name="Dibartolo G."/>
            <person name="Copeland A."/>
            <person name="Lykidis A."/>
            <person name="Trong S."/>
            <person name="Nolan M."/>
            <person name="Goltsman E."/>
            <person name="Thiel J."/>
            <person name="Malfatti S."/>
            <person name="Loper J.E."/>
            <person name="Lapidus A."/>
            <person name="Detter J.C."/>
            <person name="Land M."/>
            <person name="Richardson P.M."/>
            <person name="Kyrpides N.C."/>
            <person name="Ivanova N."/>
            <person name="Lindow S.E."/>
        </authorList>
    </citation>
    <scope>NUCLEOTIDE SEQUENCE [LARGE SCALE GENOMIC DNA]</scope>
    <source>
        <strain>B728a</strain>
    </source>
</reference>
<evidence type="ECO:0000255" key="1">
    <source>
        <dbReference type="PROSITE-ProRule" id="PRU01182"/>
    </source>
</evidence>
<evidence type="ECO:0000305" key="2"/>
<comment type="similarity">
    <text evidence="2">Belongs to the UPF0758 family.</text>
</comment>
<organism>
    <name type="scientific">Pseudomonas syringae pv. syringae (strain B728a)</name>
    <dbReference type="NCBI Taxonomy" id="205918"/>
    <lineage>
        <taxon>Bacteria</taxon>
        <taxon>Pseudomonadati</taxon>
        <taxon>Pseudomonadota</taxon>
        <taxon>Gammaproteobacteria</taxon>
        <taxon>Pseudomonadales</taxon>
        <taxon>Pseudomonadaceae</taxon>
        <taxon>Pseudomonas</taxon>
        <taxon>Pseudomonas syringae</taxon>
    </lineage>
</organism>
<protein>
    <recommendedName>
        <fullName>UPF0758 protein Psyr_0222</fullName>
    </recommendedName>
</protein>
<feature type="chain" id="PRO_1000001683" description="UPF0758 protein Psyr_0222">
    <location>
        <begin position="1"/>
        <end position="224"/>
    </location>
</feature>
<feature type="domain" description="MPN" evidence="1">
    <location>
        <begin position="102"/>
        <end position="224"/>
    </location>
</feature>
<feature type="short sequence motif" description="JAMM motif" evidence="1">
    <location>
        <begin position="173"/>
        <end position="186"/>
    </location>
</feature>
<feature type="binding site" evidence="1">
    <location>
        <position position="173"/>
    </location>
    <ligand>
        <name>Zn(2+)</name>
        <dbReference type="ChEBI" id="CHEBI:29105"/>
        <note>catalytic</note>
    </ligand>
</feature>
<feature type="binding site" evidence="1">
    <location>
        <position position="175"/>
    </location>
    <ligand>
        <name>Zn(2+)</name>
        <dbReference type="ChEBI" id="CHEBI:29105"/>
        <note>catalytic</note>
    </ligand>
</feature>
<feature type="binding site" evidence="1">
    <location>
        <position position="186"/>
    </location>
    <ligand>
        <name>Zn(2+)</name>
        <dbReference type="ChEBI" id="CHEBI:29105"/>
        <note>catalytic</note>
    </ligand>
</feature>